<organism>
    <name type="scientific">Streptococcus agalactiae serotype V (strain ATCC BAA-611 / 2603 V/R)</name>
    <dbReference type="NCBI Taxonomy" id="208435"/>
    <lineage>
        <taxon>Bacteria</taxon>
        <taxon>Bacillati</taxon>
        <taxon>Bacillota</taxon>
        <taxon>Bacilli</taxon>
        <taxon>Lactobacillales</taxon>
        <taxon>Streptococcaceae</taxon>
        <taxon>Streptococcus</taxon>
    </lineage>
</organism>
<comment type="catalytic activity">
    <reaction evidence="1">
        <text>L-citrulline + L-aspartate + ATP = 2-(N(omega)-L-arginino)succinate + AMP + diphosphate + H(+)</text>
        <dbReference type="Rhea" id="RHEA:10932"/>
        <dbReference type="ChEBI" id="CHEBI:15378"/>
        <dbReference type="ChEBI" id="CHEBI:29991"/>
        <dbReference type="ChEBI" id="CHEBI:30616"/>
        <dbReference type="ChEBI" id="CHEBI:33019"/>
        <dbReference type="ChEBI" id="CHEBI:57472"/>
        <dbReference type="ChEBI" id="CHEBI:57743"/>
        <dbReference type="ChEBI" id="CHEBI:456215"/>
        <dbReference type="EC" id="6.3.4.5"/>
    </reaction>
</comment>
<comment type="pathway">
    <text evidence="1">Amino-acid biosynthesis; L-arginine biosynthesis; L-arginine from L-ornithine and carbamoyl phosphate: step 2/3.</text>
</comment>
<comment type="subunit">
    <text evidence="1">Homotetramer.</text>
</comment>
<comment type="subcellular location">
    <subcellularLocation>
        <location evidence="1">Cytoplasm</location>
    </subcellularLocation>
</comment>
<comment type="similarity">
    <text evidence="1">Belongs to the argininosuccinate synthase family. Type 1 subfamily.</text>
</comment>
<reference key="1">
    <citation type="journal article" date="2002" name="Proc. Natl. Acad. Sci. U.S.A.">
        <title>Complete genome sequence and comparative genomic analysis of an emerging human pathogen, serotype V Streptococcus agalactiae.</title>
        <authorList>
            <person name="Tettelin H."/>
            <person name="Masignani V."/>
            <person name="Cieslewicz M.J."/>
            <person name="Eisen J.A."/>
            <person name="Peterson S.N."/>
            <person name="Wessels M.R."/>
            <person name="Paulsen I.T."/>
            <person name="Nelson K.E."/>
            <person name="Margarit I."/>
            <person name="Read T.D."/>
            <person name="Madoff L.C."/>
            <person name="Wolf A.M."/>
            <person name="Beanan M.J."/>
            <person name="Brinkac L.M."/>
            <person name="Daugherty S.C."/>
            <person name="DeBoy R.T."/>
            <person name="Durkin A.S."/>
            <person name="Kolonay J.F."/>
            <person name="Madupu R."/>
            <person name="Lewis M.R."/>
            <person name="Radune D."/>
            <person name="Fedorova N.B."/>
            <person name="Scanlan D."/>
            <person name="Khouri H.M."/>
            <person name="Mulligan S."/>
            <person name="Carty H.A."/>
            <person name="Cline R.T."/>
            <person name="Van Aken S.E."/>
            <person name="Gill J."/>
            <person name="Scarselli M."/>
            <person name="Mora M."/>
            <person name="Iacobini E.T."/>
            <person name="Brettoni C."/>
            <person name="Galli G."/>
            <person name="Mariani M."/>
            <person name="Vegni F."/>
            <person name="Maione D."/>
            <person name="Rinaudo D."/>
            <person name="Rappuoli R."/>
            <person name="Telford J.L."/>
            <person name="Kasper D.L."/>
            <person name="Grandi G."/>
            <person name="Fraser C.M."/>
        </authorList>
    </citation>
    <scope>NUCLEOTIDE SEQUENCE [LARGE SCALE GENOMIC DNA]</scope>
    <source>
        <strain>ATCC BAA-611 / 2603 V/R</strain>
    </source>
</reference>
<sequence length="396" mass="43698">MGKEKLILAYSGGLDTSVAIAWLKKDYDVIAVCMDVGEGKDLDFIHDKALTIGAIESYILDVKDEFAEHFVLPALQAHAMYEQKYPLVSALSRPIIAQKLVEMAHQTGATTIAHGCTGKGNDQVRFEVAIAALDPELKVIAPVREWKWHREEEITFAKANGVPIPADLDNPYSIDQNLWGRANECGVLENPWNQAPEEAFGITKSPEEAPDCAEYIDITFQNGKPIAINNQEMTLADLILSLNEIAGKHGIGRIDHVENRLVGIKSREIYECPAAMVLLAAHKEIEDLTLVREVSHFKPILENELSNLIYNALWFSPATKAIIAYVKETQKVVNGTTKVKLYKGSAQVVARHSSNSLYDENLATYTAADSFDQDAAVGFIKLWGLPTQVNAQVNKG</sequence>
<feature type="chain" id="PRO_0000148644" description="Argininosuccinate synthase">
    <location>
        <begin position="1"/>
        <end position="396"/>
    </location>
</feature>
<feature type="binding site" evidence="1">
    <location>
        <begin position="9"/>
        <end position="17"/>
    </location>
    <ligand>
        <name>ATP</name>
        <dbReference type="ChEBI" id="CHEBI:30616"/>
    </ligand>
</feature>
<feature type="binding site" evidence="1">
    <location>
        <position position="85"/>
    </location>
    <ligand>
        <name>L-citrulline</name>
        <dbReference type="ChEBI" id="CHEBI:57743"/>
    </ligand>
</feature>
<feature type="binding site" evidence="1">
    <location>
        <position position="115"/>
    </location>
    <ligand>
        <name>ATP</name>
        <dbReference type="ChEBI" id="CHEBI:30616"/>
    </ligand>
</feature>
<feature type="binding site" evidence="1">
    <location>
        <position position="117"/>
    </location>
    <ligand>
        <name>L-aspartate</name>
        <dbReference type="ChEBI" id="CHEBI:29991"/>
    </ligand>
</feature>
<feature type="binding site" evidence="1">
    <location>
        <position position="121"/>
    </location>
    <ligand>
        <name>L-aspartate</name>
        <dbReference type="ChEBI" id="CHEBI:29991"/>
    </ligand>
</feature>
<feature type="binding site" evidence="1">
    <location>
        <position position="121"/>
    </location>
    <ligand>
        <name>L-citrulline</name>
        <dbReference type="ChEBI" id="CHEBI:57743"/>
    </ligand>
</feature>
<feature type="binding site" evidence="1">
    <location>
        <position position="122"/>
    </location>
    <ligand>
        <name>L-aspartate</name>
        <dbReference type="ChEBI" id="CHEBI:29991"/>
    </ligand>
</feature>
<feature type="binding site" evidence="1">
    <location>
        <position position="125"/>
    </location>
    <ligand>
        <name>L-citrulline</name>
        <dbReference type="ChEBI" id="CHEBI:57743"/>
    </ligand>
</feature>
<feature type="binding site" evidence="1">
    <location>
        <position position="173"/>
    </location>
    <ligand>
        <name>L-citrulline</name>
        <dbReference type="ChEBI" id="CHEBI:57743"/>
    </ligand>
</feature>
<feature type="binding site" evidence="1">
    <location>
        <position position="258"/>
    </location>
    <ligand>
        <name>L-citrulline</name>
        <dbReference type="ChEBI" id="CHEBI:57743"/>
    </ligand>
</feature>
<feature type="binding site" evidence="1">
    <location>
        <position position="270"/>
    </location>
    <ligand>
        <name>L-citrulline</name>
        <dbReference type="ChEBI" id="CHEBI:57743"/>
    </ligand>
</feature>
<evidence type="ECO:0000255" key="1">
    <source>
        <dbReference type="HAMAP-Rule" id="MF_00005"/>
    </source>
</evidence>
<proteinExistence type="inferred from homology"/>
<gene>
    <name evidence="1" type="primary">argG</name>
    <name type="ordered locus">SAG0125</name>
</gene>
<name>ASSY_STRA5</name>
<keyword id="KW-0028">Amino-acid biosynthesis</keyword>
<keyword id="KW-0055">Arginine biosynthesis</keyword>
<keyword id="KW-0067">ATP-binding</keyword>
<keyword id="KW-0963">Cytoplasm</keyword>
<keyword id="KW-0436">Ligase</keyword>
<keyword id="KW-0547">Nucleotide-binding</keyword>
<keyword id="KW-1185">Reference proteome</keyword>
<dbReference type="EC" id="6.3.4.5" evidence="1"/>
<dbReference type="EMBL" id="AE009948">
    <property type="protein sequence ID" value="AAM99033.1"/>
    <property type="molecule type" value="Genomic_DNA"/>
</dbReference>
<dbReference type="RefSeq" id="NP_687161.1">
    <property type="nucleotide sequence ID" value="NC_004116.1"/>
</dbReference>
<dbReference type="RefSeq" id="WP_000514047.1">
    <property type="nucleotide sequence ID" value="NC_004116.1"/>
</dbReference>
<dbReference type="SMR" id="Q8E272"/>
<dbReference type="STRING" id="208435.SAG0125"/>
<dbReference type="KEGG" id="sag:SAG0125"/>
<dbReference type="PATRIC" id="fig|208435.3.peg.123"/>
<dbReference type="HOGENOM" id="CLU_032784_4_2_9"/>
<dbReference type="OrthoDB" id="9801641at2"/>
<dbReference type="UniPathway" id="UPA00068">
    <property type="reaction ID" value="UER00113"/>
</dbReference>
<dbReference type="Proteomes" id="UP000000821">
    <property type="component" value="Chromosome"/>
</dbReference>
<dbReference type="GO" id="GO:0005737">
    <property type="term" value="C:cytoplasm"/>
    <property type="evidence" value="ECO:0007669"/>
    <property type="project" value="UniProtKB-SubCell"/>
</dbReference>
<dbReference type="GO" id="GO:0004055">
    <property type="term" value="F:argininosuccinate synthase activity"/>
    <property type="evidence" value="ECO:0007669"/>
    <property type="project" value="UniProtKB-UniRule"/>
</dbReference>
<dbReference type="GO" id="GO:0005524">
    <property type="term" value="F:ATP binding"/>
    <property type="evidence" value="ECO:0007669"/>
    <property type="project" value="UniProtKB-UniRule"/>
</dbReference>
<dbReference type="GO" id="GO:0000053">
    <property type="term" value="P:argininosuccinate metabolic process"/>
    <property type="evidence" value="ECO:0007669"/>
    <property type="project" value="TreeGrafter"/>
</dbReference>
<dbReference type="GO" id="GO:0006526">
    <property type="term" value="P:L-arginine biosynthetic process"/>
    <property type="evidence" value="ECO:0007669"/>
    <property type="project" value="UniProtKB-UniRule"/>
</dbReference>
<dbReference type="GO" id="GO:0000050">
    <property type="term" value="P:urea cycle"/>
    <property type="evidence" value="ECO:0007669"/>
    <property type="project" value="TreeGrafter"/>
</dbReference>
<dbReference type="CDD" id="cd01999">
    <property type="entry name" value="ASS"/>
    <property type="match status" value="1"/>
</dbReference>
<dbReference type="FunFam" id="1.20.5.470:FF:000002">
    <property type="entry name" value="Argininosuccinate synthase"/>
    <property type="match status" value="1"/>
</dbReference>
<dbReference type="FunFam" id="3.40.50.620:FF:000038">
    <property type="entry name" value="Argininosuccinate synthase"/>
    <property type="match status" value="1"/>
</dbReference>
<dbReference type="FunFam" id="3.90.1260.10:FF:000007">
    <property type="entry name" value="Argininosuccinate synthase"/>
    <property type="match status" value="1"/>
</dbReference>
<dbReference type="Gene3D" id="3.90.1260.10">
    <property type="entry name" value="Argininosuccinate synthetase, chain A, domain 2"/>
    <property type="match status" value="1"/>
</dbReference>
<dbReference type="Gene3D" id="3.40.50.620">
    <property type="entry name" value="HUPs"/>
    <property type="match status" value="1"/>
</dbReference>
<dbReference type="Gene3D" id="1.20.5.470">
    <property type="entry name" value="Single helix bin"/>
    <property type="match status" value="1"/>
</dbReference>
<dbReference type="HAMAP" id="MF_00005">
    <property type="entry name" value="Arg_succ_synth_type1"/>
    <property type="match status" value="1"/>
</dbReference>
<dbReference type="InterPro" id="IPR048268">
    <property type="entry name" value="Arginosuc_syn_C"/>
</dbReference>
<dbReference type="InterPro" id="IPR048267">
    <property type="entry name" value="Arginosuc_syn_N"/>
</dbReference>
<dbReference type="InterPro" id="IPR001518">
    <property type="entry name" value="Arginosuc_synth"/>
</dbReference>
<dbReference type="InterPro" id="IPR018223">
    <property type="entry name" value="Arginosuc_synth_CS"/>
</dbReference>
<dbReference type="InterPro" id="IPR023434">
    <property type="entry name" value="Arginosuc_synth_type_1_subfam"/>
</dbReference>
<dbReference type="InterPro" id="IPR024074">
    <property type="entry name" value="AS_cat/multimer_dom_body"/>
</dbReference>
<dbReference type="InterPro" id="IPR014729">
    <property type="entry name" value="Rossmann-like_a/b/a_fold"/>
</dbReference>
<dbReference type="NCBIfam" id="TIGR00032">
    <property type="entry name" value="argG"/>
    <property type="match status" value="1"/>
</dbReference>
<dbReference type="NCBIfam" id="NF001770">
    <property type="entry name" value="PRK00509.1"/>
    <property type="match status" value="1"/>
</dbReference>
<dbReference type="PANTHER" id="PTHR11587">
    <property type="entry name" value="ARGININOSUCCINATE SYNTHASE"/>
    <property type="match status" value="1"/>
</dbReference>
<dbReference type="PANTHER" id="PTHR11587:SF2">
    <property type="entry name" value="ARGININOSUCCINATE SYNTHASE"/>
    <property type="match status" value="1"/>
</dbReference>
<dbReference type="Pfam" id="PF20979">
    <property type="entry name" value="Arginosuc_syn_C"/>
    <property type="match status" value="1"/>
</dbReference>
<dbReference type="Pfam" id="PF00764">
    <property type="entry name" value="Arginosuc_synth"/>
    <property type="match status" value="1"/>
</dbReference>
<dbReference type="SUPFAM" id="SSF52402">
    <property type="entry name" value="Adenine nucleotide alpha hydrolases-like"/>
    <property type="match status" value="1"/>
</dbReference>
<dbReference type="SUPFAM" id="SSF69864">
    <property type="entry name" value="Argininosuccinate synthetase, C-terminal domain"/>
    <property type="match status" value="1"/>
</dbReference>
<dbReference type="PROSITE" id="PS00564">
    <property type="entry name" value="ARGININOSUCCIN_SYN_1"/>
    <property type="match status" value="1"/>
</dbReference>
<dbReference type="PROSITE" id="PS00565">
    <property type="entry name" value="ARGININOSUCCIN_SYN_2"/>
    <property type="match status" value="1"/>
</dbReference>
<protein>
    <recommendedName>
        <fullName evidence="1">Argininosuccinate synthase</fullName>
        <ecNumber evidence="1">6.3.4.5</ecNumber>
    </recommendedName>
    <alternativeName>
        <fullName evidence="1">Citrulline--aspartate ligase</fullName>
    </alternativeName>
</protein>
<accession>Q8E272</accession>